<comment type="function">
    <text>Transforms homoprotocatechuic acid (HPC) into 5-carboxymethyl-2-hydroxy-muconic semialdehyde (CHMS).</text>
</comment>
<comment type="catalytic activity">
    <reaction>
        <text>3,4-dihydroxyphenylacetate + O2 = 2-hydroxy-5-carboxymethylmuconate semialdehyde + H(+)</text>
        <dbReference type="Rhea" id="RHEA:15633"/>
        <dbReference type="ChEBI" id="CHEBI:15378"/>
        <dbReference type="ChEBI" id="CHEBI:15379"/>
        <dbReference type="ChEBI" id="CHEBI:17612"/>
        <dbReference type="ChEBI" id="CHEBI:58030"/>
        <dbReference type="EC" id="1.13.11.15"/>
    </reaction>
</comment>
<comment type="cofactor">
    <cofactor>
        <name>Fe cation</name>
        <dbReference type="ChEBI" id="CHEBI:24875"/>
    </cofactor>
</comment>
<comment type="pathway">
    <text>Aromatic compound metabolism; 4-hydroxyphenylacetate degradation; pyruvate and succinate semialdehyde from 4-hydroxyphenylacetate: step 2/7.</text>
</comment>
<sequence>MGKLALAAKITHVPSMYLSELPGKNHGCRQGAIDGHKEISKRCREMGVDTIIVFDTHWLVNSAYHINCADHFEGVYTSNELPHFIRDMTYNYEGNPELGQLIADEALKLGVRAKAHNIPSLKLEYGSVVPMRYMNEDKRFKVVSISAFCTVHDFADSRKLGERIVKAIEQYDGTVAVLASGSLSHRFIDDQRAEEGMNSYTREFDRQMDERVVKLWREGQFKEFCNMLPEYADYCYGEGNMHDTVMLLGMLGWDKYDGKVWSLSPSYSQASWHRSG</sequence>
<protein>
    <recommendedName>
        <fullName>3,4-dihydroxyphenylacetate 2,3-dioxygenase</fullName>
        <ecNumber>1.13.11.15</ecNumber>
    </recommendedName>
    <alternativeName>
        <fullName>Homoprotocatechuate 2,3-dioxygenase</fullName>
        <shortName>HPC dioxygenase</shortName>
    </alternativeName>
</protein>
<accession>Q05353</accession>
<proteinExistence type="evidence at protein level"/>
<dbReference type="EC" id="1.13.11.15"/>
<dbReference type="EMBL" id="X55200">
    <property type="protein sequence ID" value="CAA38985.1"/>
    <property type="molecule type" value="Genomic_DNA"/>
</dbReference>
<dbReference type="PIR" id="S12962">
    <property type="entry name" value="S12962"/>
</dbReference>
<dbReference type="SMR" id="Q05353"/>
<dbReference type="STRING" id="585034.ECIAI1_4573"/>
<dbReference type="KEGG" id="ag:CAA38985"/>
<dbReference type="eggNOG" id="COG3384">
    <property type="taxonomic scope" value="Bacteria"/>
</dbReference>
<dbReference type="UniPathway" id="UPA00208">
    <property type="reaction ID" value="UER00417"/>
</dbReference>
<dbReference type="GO" id="GO:0008687">
    <property type="term" value="F:3,4-dihydroxyphenylacetate 2,3-dioxygenase activity"/>
    <property type="evidence" value="ECO:0007669"/>
    <property type="project" value="UniProtKB-EC"/>
</dbReference>
<dbReference type="GO" id="GO:0008198">
    <property type="term" value="F:ferrous iron binding"/>
    <property type="evidence" value="ECO:0007669"/>
    <property type="project" value="InterPro"/>
</dbReference>
<dbReference type="GO" id="GO:0009056">
    <property type="term" value="P:catabolic process"/>
    <property type="evidence" value="ECO:0007669"/>
    <property type="project" value="UniProtKB-KW"/>
</dbReference>
<dbReference type="CDD" id="cd07370">
    <property type="entry name" value="HPCD"/>
    <property type="match status" value="1"/>
</dbReference>
<dbReference type="Gene3D" id="3.40.830.10">
    <property type="entry name" value="LigB-like"/>
    <property type="match status" value="1"/>
</dbReference>
<dbReference type="InterPro" id="IPR011984">
    <property type="entry name" value="HPCD"/>
</dbReference>
<dbReference type="InterPro" id="IPR004183">
    <property type="entry name" value="Xdiol_dOase_suB"/>
</dbReference>
<dbReference type="NCBIfam" id="TIGR02298">
    <property type="entry name" value="HpaD_Fe"/>
    <property type="match status" value="1"/>
</dbReference>
<dbReference type="PANTHER" id="PTHR30096">
    <property type="entry name" value="4,5-DOPA DIOXYGENASE EXTRADIOL-LIKE PROTEIN"/>
    <property type="match status" value="1"/>
</dbReference>
<dbReference type="PANTHER" id="PTHR30096:SF9">
    <property type="entry name" value="4-HYDROXYPHENYLACETATE CATABOLISM PROTEIN"/>
    <property type="match status" value="1"/>
</dbReference>
<dbReference type="Pfam" id="PF02900">
    <property type="entry name" value="LigB"/>
    <property type="match status" value="1"/>
</dbReference>
<dbReference type="SUPFAM" id="SSF53213">
    <property type="entry name" value="LigB-like"/>
    <property type="match status" value="1"/>
</dbReference>
<organism>
    <name type="scientific">Escherichia coli</name>
    <dbReference type="NCBI Taxonomy" id="562"/>
    <lineage>
        <taxon>Bacteria</taxon>
        <taxon>Pseudomonadati</taxon>
        <taxon>Pseudomonadota</taxon>
        <taxon>Gammaproteobacteria</taxon>
        <taxon>Enterobacterales</taxon>
        <taxon>Enterobacteriaceae</taxon>
        <taxon>Escherichia</taxon>
    </lineage>
</organism>
<feature type="initiator methionine" description="Removed" evidence="1">
    <location>
        <position position="1"/>
    </location>
</feature>
<feature type="chain" id="PRO_0000084040" description="3,4-dihydroxyphenylacetate 2,3-dioxygenase">
    <location>
        <begin position="2"/>
        <end position="276"/>
    </location>
</feature>
<evidence type="ECO:0000269" key="1">
    <source>
    </source>
</evidence>
<name>HPCB_ECOLX</name>
<gene>
    <name type="primary">hpcB</name>
</gene>
<keyword id="KW-0058">Aromatic hydrocarbons catabolism</keyword>
<keyword id="KW-0223">Dioxygenase</keyword>
<keyword id="KW-0903">Direct protein sequencing</keyword>
<keyword id="KW-0408">Iron</keyword>
<keyword id="KW-0560">Oxidoreductase</keyword>
<reference key="1">
    <citation type="journal article" date="1990" name="FEBS Lett.">
        <title>Subcloning and nucleotide sequence of the 3,4-dihydroxyphenylacetate (homoprotocatechuate) 2,3-dioxygenase gene from Escherichia coli C.</title>
        <authorList>
            <person name="Roper D.I."/>
            <person name="Cooper R.A."/>
        </authorList>
    </citation>
    <scope>NUCLEOTIDE SEQUENCE [GENOMIC DNA]</scope>
    <scope>PROTEIN SEQUENCE OF 2-22</scope>
    <source>
        <strain>C</strain>
    </source>
</reference>